<sequence>MYKLNVISLIILTTCSGAAYASTPDFPQHHKTVFGTVTIEKTTADKMTIKQGSDKAQIDWKSFDIGQKKEVKFEQPNEHAVAYNRVIGGNASQIQGKLTANGKVYLANPNGVIITQGAEINVAGLLATTKDLERISENSNSYQFTRRTKDRQVLKEGLVLKDGQVVKEGQVINEGNITAQDFVVLNGDEVINKGNINVEKNSTINGKVYLSSGYNFTFTLPDSGISVALEDNTVQGIVKNEGSIKAGEITLSAKGRKQALDSLVMNNGVLEATKVSNKNGKVVLSADNVELNNESNIKGEIVTFGADVTSNKELKDNIKITSKTGSKVTSPKINFTGKSVNINGNFGREDSTTHYKDEFKKLNTEVNIDVPDNENIRIADIEDNTGTGTTGTGTSSFIQTGALSSLLANNGKVNLKGNNVNISGRIHIDSFRGSDSLLKLTNKGHIDINNADIHSKGRLFFITSLQNEEDFKSNITITDSKINLGNGAMGLGRSVDEKDYDNRWQKTEGSQRKKFDVKMSNVEFNQVDDVILAGGFEKVNLDKIVATGQTNFYIDGGVSRNGRKYEYGVLDLDKRTQLSELNQGRRRWGYYYDLELDMNRAYLYRFDLFATKNTGRSTIKDTEINISNSNINLKNGFVHLLAEKIKLDNSKIDITFDKDNSQDTLAQTNRLGMNGKVSMINSHIKIVGDEKEGISPTGTYATMFLIGELIGEKSSIFVKSHQGYTFKTDGNTKIAGKYSKEDLKITAINTGGRAAEEVLINGALGSADNDANIANMAFTIGDSANTKTTIENADITALAPNGGTAYLSSKDVEIEVKPNSNFTFFELPREKNLNQTKINGASTKLSERGFARLYDKINGVRASNLSAEQLNVTDASEKIINTKLVSSLDVEKLVSVAVCDAGNGCEEQQFGDKGNNTKVSVGELEAEQ</sequence>
<accession>P45354</accession>
<organism>
    <name type="scientific">Haemophilus influenzae</name>
    <dbReference type="NCBI Taxonomy" id="727"/>
    <lineage>
        <taxon>Bacteria</taxon>
        <taxon>Pseudomonadati</taxon>
        <taxon>Pseudomonadota</taxon>
        <taxon>Gammaproteobacteria</taxon>
        <taxon>Pasteurellales</taxon>
        <taxon>Pasteurellaceae</taxon>
        <taxon>Haemophilus</taxon>
    </lineage>
</organism>
<name>HXUA2_HAEIF</name>
<keyword id="KW-0903">Direct protein sequencing</keyword>
<keyword id="KW-0677">Repeat</keyword>
<keyword id="KW-0964">Secreted</keyword>
<keyword id="KW-0732">Signal</keyword>
<keyword id="KW-0813">Transport</keyword>
<proteinExistence type="evidence at protein level"/>
<reference key="1">
    <citation type="journal article" date="1994" name="Mol. Microbiol.">
        <title>The 100 kDa haem:haemopexin-binding protein of Haemophilus influenzae: structure and localization.</title>
        <authorList>
            <person name="Cope L.D."/>
            <person name="Thomas S.E."/>
            <person name="Latimer J.L."/>
            <person name="Slaughter C.A."/>
            <person name="Mueller-Eberhard U."/>
            <person name="Hansen E.J."/>
        </authorList>
    </citation>
    <scope>NUCLEOTIDE SEQUENCE [GENOMIC DNA]</scope>
    <scope>PROTEIN SEQUENCE OF 22-35</scope>
    <source>
        <strain>DL42 / Serotype B</strain>
    </source>
</reference>
<reference key="2">
    <citation type="journal article" date="1995" name="J. Bacteriol.">
        <title>A gene cluster involved in the utilization of both free heme and heme:hemopexin by Haemophilus influenzae type b.</title>
        <authorList>
            <person name="Cope L.D."/>
            <person name="Yogev R."/>
            <person name="Mueller-Eberhard U."/>
            <person name="Hansen E.J."/>
        </authorList>
    </citation>
    <scope>NUCLEOTIDE SEQUENCE [GENOMIC DNA] OF 1-30</scope>
    <source>
        <strain>DL42 / Serotype B</strain>
    </source>
</reference>
<dbReference type="EMBL" id="U08348">
    <property type="protein sequence ID" value="AAA74138.1"/>
    <property type="molecule type" value="Genomic_DNA"/>
</dbReference>
<dbReference type="PIR" id="S54699">
    <property type="entry name" value="S54699"/>
</dbReference>
<dbReference type="RefSeq" id="WP_015701486.1">
    <property type="nucleotide sequence ID" value="NZ_UEXC01000016.1"/>
</dbReference>
<dbReference type="SMR" id="P45354"/>
<dbReference type="GO" id="GO:0005576">
    <property type="term" value="C:extracellular region"/>
    <property type="evidence" value="ECO:0007669"/>
    <property type="project" value="UniProtKB-SubCell"/>
</dbReference>
<dbReference type="Gene3D" id="2.160.20.10">
    <property type="entry name" value="Single-stranded right-handed beta-helix, Pectin lyase-like"/>
    <property type="match status" value="1"/>
</dbReference>
<dbReference type="InterPro" id="IPR050909">
    <property type="entry name" value="Bact_Autotransporter_VF"/>
</dbReference>
<dbReference type="InterPro" id="IPR008638">
    <property type="entry name" value="FhaB/CdiA-like_TPS"/>
</dbReference>
<dbReference type="InterPro" id="IPR012334">
    <property type="entry name" value="Pectin_lyas_fold"/>
</dbReference>
<dbReference type="InterPro" id="IPR011050">
    <property type="entry name" value="Pectin_lyase_fold/virulence"/>
</dbReference>
<dbReference type="NCBIfam" id="TIGR01901">
    <property type="entry name" value="adhes_NPXG"/>
    <property type="match status" value="1"/>
</dbReference>
<dbReference type="PANTHER" id="PTHR12338">
    <property type="entry name" value="AUTOTRANSPORTER"/>
    <property type="match status" value="1"/>
</dbReference>
<dbReference type="PANTHER" id="PTHR12338:SF8">
    <property type="entry name" value="HEME_HEMOPEXIN-BINDING PROTEIN"/>
    <property type="match status" value="1"/>
</dbReference>
<dbReference type="Pfam" id="PF05860">
    <property type="entry name" value="TPS"/>
    <property type="match status" value="1"/>
</dbReference>
<dbReference type="SMART" id="SM00912">
    <property type="entry name" value="Haemagg_act"/>
    <property type="match status" value="1"/>
</dbReference>
<dbReference type="SUPFAM" id="SSF51126">
    <property type="entry name" value="Pectin lyase-like"/>
    <property type="match status" value="1"/>
</dbReference>
<protein>
    <recommendedName>
        <fullName>Heme/hemopexin-binding protein</fullName>
    </recommendedName>
    <alternativeName>
        <fullName>Heme:hemopexin utilization protein A</fullName>
    </alternativeName>
</protein>
<feature type="signal peptide" evidence="1">
    <location>
        <begin position="1"/>
        <end position="21"/>
    </location>
</feature>
<feature type="chain" id="PRO_0000021468" description="Heme/hemopexin-binding protein">
    <location>
        <begin position="22"/>
        <end position="928"/>
    </location>
</feature>
<feature type="repeat" description="1-1">
    <location>
        <begin position="101"/>
        <end position="106"/>
    </location>
</feature>
<feature type="repeat" description="2-1">
    <location>
        <begin position="149"/>
        <end position="154"/>
    </location>
</feature>
<feature type="repeat" description="2-2">
    <location>
        <begin position="155"/>
        <end position="160"/>
    </location>
</feature>
<feature type="repeat" description="2-3">
    <location>
        <begin position="161"/>
        <end position="166"/>
    </location>
</feature>
<feature type="repeat" description="2-4">
    <location>
        <begin position="167"/>
        <end position="172"/>
    </location>
</feature>
<feature type="repeat" description="1-2">
    <location>
        <begin position="205"/>
        <end position="210"/>
    </location>
</feature>
<feature type="repeat" description="1-3">
    <location>
        <begin position="279"/>
        <end position="284"/>
    </location>
</feature>
<feature type="repeat" description="1-4">
    <location>
        <begin position="410"/>
        <end position="415"/>
    </location>
</feature>
<feature type="repeat" description="1-5">
    <location>
        <begin position="635"/>
        <end position="640"/>
    </location>
</feature>
<feature type="repeat" description="1-6">
    <location>
        <begin position="674"/>
        <end position="679"/>
    </location>
</feature>
<feature type="region of interest" description="6 X 6 AA approximate repeats">
    <location>
        <begin position="101"/>
        <end position="679"/>
    </location>
</feature>
<feature type="region of interest" description="4 X 6 AA approximate tandem repeats">
    <location>
        <begin position="149"/>
        <end position="172"/>
    </location>
</feature>
<comment type="function">
    <text>Binds heme/hemopexin complexes.</text>
</comment>
<comment type="subcellular location">
    <subcellularLocation>
        <location>Secreted</location>
    </subcellularLocation>
</comment>
<gene>
    <name type="primary">hxuA</name>
</gene>
<evidence type="ECO:0000269" key="1">
    <source>
    </source>
</evidence>